<protein>
    <recommendedName>
        <fullName evidence="2">cGMP-specific 3',5'-cyclic phosphodiesterase</fullName>
        <ecNumber>3.1.4.35</ecNumber>
    </recommendedName>
</protein>
<keyword id="KW-1003">Cell membrane</keyword>
<keyword id="KW-0140">cGMP</keyword>
<keyword id="KW-0378">Hydrolase</keyword>
<keyword id="KW-0449">Lipoprotein</keyword>
<keyword id="KW-0472">Membrane</keyword>
<keyword id="KW-0479">Metal-binding</keyword>
<keyword id="KW-0488">Methylation</keyword>
<keyword id="KW-0636">Prenylation</keyword>
<keyword id="KW-1185">Reference proteome</keyword>
<keyword id="KW-0677">Repeat</keyword>
<gene>
    <name evidence="2" type="primary">Pde6</name>
    <name type="ORF">GF17478</name>
</gene>
<feature type="chain" id="PRO_0000363684" description="cGMP-specific 3',5'-cyclic phosphodiesterase">
    <location>
        <begin position="1"/>
        <end position="1155"/>
    </location>
</feature>
<feature type="propeptide" id="PRO_0000363685" description="Removed in mature form" evidence="2">
    <location>
        <begin position="1156"/>
        <end position="1158"/>
    </location>
</feature>
<feature type="domain" description="GAF 1" evidence="3">
    <location>
        <begin position="242"/>
        <end position="394"/>
    </location>
</feature>
<feature type="domain" description="GAF 2" evidence="3">
    <location>
        <begin position="426"/>
        <end position="640"/>
    </location>
</feature>
<feature type="domain" description="PDEase" evidence="4">
    <location>
        <begin position="670"/>
        <end position="993"/>
    </location>
</feature>
<feature type="region of interest" description="Disordered" evidence="5">
    <location>
        <begin position="1"/>
        <end position="137"/>
    </location>
</feature>
<feature type="region of interest" description="Disordered" evidence="5">
    <location>
        <begin position="195"/>
        <end position="216"/>
    </location>
</feature>
<feature type="region of interest" description="Disordered" evidence="5">
    <location>
        <begin position="1034"/>
        <end position="1065"/>
    </location>
</feature>
<feature type="region of interest" description="Disordered" evidence="5">
    <location>
        <begin position="1097"/>
        <end position="1158"/>
    </location>
</feature>
<feature type="compositionally biased region" description="Low complexity" evidence="5">
    <location>
        <begin position="30"/>
        <end position="71"/>
    </location>
</feature>
<feature type="compositionally biased region" description="Polar residues" evidence="5">
    <location>
        <begin position="108"/>
        <end position="135"/>
    </location>
</feature>
<feature type="compositionally biased region" description="Low complexity" evidence="5">
    <location>
        <begin position="202"/>
        <end position="215"/>
    </location>
</feature>
<feature type="compositionally biased region" description="Basic and acidic residues" evidence="5">
    <location>
        <begin position="1041"/>
        <end position="1052"/>
    </location>
</feature>
<feature type="compositionally biased region" description="Low complexity" evidence="5">
    <location>
        <begin position="1114"/>
        <end position="1130"/>
    </location>
</feature>
<feature type="compositionally biased region" description="Basic residues" evidence="5">
    <location>
        <begin position="1148"/>
        <end position="1158"/>
    </location>
</feature>
<feature type="active site" description="Proton donor" evidence="1">
    <location>
        <position position="746"/>
    </location>
</feature>
<feature type="binding site" evidence="1">
    <location>
        <position position="750"/>
    </location>
    <ligand>
        <name>a divalent metal cation</name>
        <dbReference type="ChEBI" id="CHEBI:60240"/>
        <label>1</label>
    </ligand>
</feature>
<feature type="binding site" evidence="1">
    <location>
        <position position="786"/>
    </location>
    <ligand>
        <name>a divalent metal cation</name>
        <dbReference type="ChEBI" id="CHEBI:60240"/>
        <label>1</label>
    </ligand>
</feature>
<feature type="binding site" evidence="1">
    <location>
        <position position="787"/>
    </location>
    <ligand>
        <name>a divalent metal cation</name>
        <dbReference type="ChEBI" id="CHEBI:60240"/>
        <label>1</label>
    </ligand>
</feature>
<feature type="binding site" evidence="1">
    <location>
        <position position="787"/>
    </location>
    <ligand>
        <name>a divalent metal cation</name>
        <dbReference type="ChEBI" id="CHEBI:60240"/>
        <label>2</label>
    </ligand>
</feature>
<feature type="binding site" evidence="1">
    <location>
        <position position="897"/>
    </location>
    <ligand>
        <name>a divalent metal cation</name>
        <dbReference type="ChEBI" id="CHEBI:60240"/>
        <label>1</label>
    </ligand>
</feature>
<feature type="modified residue" description="Cysteine methyl ester" evidence="2">
    <location>
        <position position="1155"/>
    </location>
</feature>
<feature type="lipid moiety-binding region" description="S-farnesyl cysteine" evidence="2">
    <location>
        <position position="1155"/>
    </location>
</feature>
<name>PDE6_DROAN</name>
<organism>
    <name type="scientific">Drosophila ananassae</name>
    <name type="common">Fruit fly</name>
    <dbReference type="NCBI Taxonomy" id="7217"/>
    <lineage>
        <taxon>Eukaryota</taxon>
        <taxon>Metazoa</taxon>
        <taxon>Ecdysozoa</taxon>
        <taxon>Arthropoda</taxon>
        <taxon>Hexapoda</taxon>
        <taxon>Insecta</taxon>
        <taxon>Pterygota</taxon>
        <taxon>Neoptera</taxon>
        <taxon>Endopterygota</taxon>
        <taxon>Diptera</taxon>
        <taxon>Brachycera</taxon>
        <taxon>Muscomorpha</taxon>
        <taxon>Ephydroidea</taxon>
        <taxon>Drosophilidae</taxon>
        <taxon>Drosophila</taxon>
        <taxon>Sophophora</taxon>
    </lineage>
</organism>
<reference evidence="6" key="1">
    <citation type="journal article" date="2007" name="Nature">
        <title>Evolution of genes and genomes on the Drosophila phylogeny.</title>
        <authorList>
            <consortium name="Drosophila 12 genomes consortium"/>
        </authorList>
    </citation>
    <scope>NUCLEOTIDE SEQUENCE [LARGE SCALE GENOMIC DNA]</scope>
    <source>
        <strain evidence="6">Tucson 14024-0371.13</strain>
    </source>
</reference>
<evidence type="ECO:0000250" key="1"/>
<evidence type="ECO:0000250" key="2">
    <source>
        <dbReference type="UniProtKB" id="Q9VFI9"/>
    </source>
</evidence>
<evidence type="ECO:0000255" key="3"/>
<evidence type="ECO:0000255" key="4">
    <source>
        <dbReference type="PROSITE-ProRule" id="PRU01192"/>
    </source>
</evidence>
<evidence type="ECO:0000256" key="5">
    <source>
        <dbReference type="SAM" id="MobiDB-lite"/>
    </source>
</evidence>
<evidence type="ECO:0000312" key="6">
    <source>
        <dbReference type="EMBL" id="EDV41498.1"/>
    </source>
</evidence>
<accession>B3LVW5</accession>
<dbReference type="EC" id="3.1.4.35"/>
<dbReference type="EMBL" id="CH902617">
    <property type="protein sequence ID" value="EDV41498.1"/>
    <property type="molecule type" value="Genomic_DNA"/>
</dbReference>
<dbReference type="RefSeq" id="XP_001952915.2">
    <property type="nucleotide sequence ID" value="XM_001952880.2"/>
</dbReference>
<dbReference type="SMR" id="B3LVW5"/>
<dbReference type="FunCoup" id="B3LVW5">
    <property type="interactions" value="208"/>
</dbReference>
<dbReference type="STRING" id="7217.B3LVW5"/>
<dbReference type="GeneID" id="6500262"/>
<dbReference type="KEGG" id="dan:6500262"/>
<dbReference type="eggNOG" id="KOG3689">
    <property type="taxonomic scope" value="Eukaryota"/>
</dbReference>
<dbReference type="HOGENOM" id="CLU_006980_0_2_1"/>
<dbReference type="InParanoid" id="B3LVW5"/>
<dbReference type="OMA" id="FHIPYEV"/>
<dbReference type="OrthoDB" id="74705at2759"/>
<dbReference type="PhylomeDB" id="B3LVW5"/>
<dbReference type="ChiTaRS" id="Pde6">
    <property type="organism name" value="fly"/>
</dbReference>
<dbReference type="Proteomes" id="UP000007801">
    <property type="component" value="Unassembled WGS sequence"/>
</dbReference>
<dbReference type="GO" id="GO:0005737">
    <property type="term" value="C:cytoplasm"/>
    <property type="evidence" value="ECO:0000250"/>
    <property type="project" value="UniProtKB"/>
</dbReference>
<dbReference type="GO" id="GO:0016020">
    <property type="term" value="C:membrane"/>
    <property type="evidence" value="ECO:0000250"/>
    <property type="project" value="UniProtKB"/>
</dbReference>
<dbReference type="GO" id="GO:0005634">
    <property type="term" value="C:nucleus"/>
    <property type="evidence" value="ECO:0000250"/>
    <property type="project" value="UniProtKB"/>
</dbReference>
<dbReference type="GO" id="GO:0005886">
    <property type="term" value="C:plasma membrane"/>
    <property type="evidence" value="ECO:0007669"/>
    <property type="project" value="UniProtKB-SubCell"/>
</dbReference>
<dbReference type="GO" id="GO:0047555">
    <property type="term" value="F:3',5'-cyclic-GMP phosphodiesterase activity"/>
    <property type="evidence" value="ECO:0000250"/>
    <property type="project" value="UniProtKB"/>
</dbReference>
<dbReference type="GO" id="GO:0046872">
    <property type="term" value="F:metal ion binding"/>
    <property type="evidence" value="ECO:0007669"/>
    <property type="project" value="UniProtKB-KW"/>
</dbReference>
<dbReference type="GO" id="GO:0046068">
    <property type="term" value="P:cGMP metabolic process"/>
    <property type="evidence" value="ECO:0000250"/>
    <property type="project" value="UniProtKB"/>
</dbReference>
<dbReference type="GO" id="GO:0007165">
    <property type="term" value="P:signal transduction"/>
    <property type="evidence" value="ECO:0007669"/>
    <property type="project" value="InterPro"/>
</dbReference>
<dbReference type="CDD" id="cd00077">
    <property type="entry name" value="HDc"/>
    <property type="match status" value="1"/>
</dbReference>
<dbReference type="FunFam" id="1.10.1300.10:FF:000003">
    <property type="entry name" value="Phosphodiesterase"/>
    <property type="match status" value="1"/>
</dbReference>
<dbReference type="FunFam" id="3.30.450.40:FF:000031">
    <property type="entry name" value="Phosphodiesterase"/>
    <property type="match status" value="1"/>
</dbReference>
<dbReference type="Gene3D" id="3.30.450.40">
    <property type="match status" value="2"/>
</dbReference>
<dbReference type="Gene3D" id="1.10.1300.10">
    <property type="entry name" value="3'5'-cyclic nucleotide phosphodiesterase, catalytic domain"/>
    <property type="match status" value="1"/>
</dbReference>
<dbReference type="InterPro" id="IPR003018">
    <property type="entry name" value="GAF"/>
</dbReference>
<dbReference type="InterPro" id="IPR029016">
    <property type="entry name" value="GAF-like_dom_sf"/>
</dbReference>
<dbReference type="InterPro" id="IPR003607">
    <property type="entry name" value="HD/PDEase_dom"/>
</dbReference>
<dbReference type="InterPro" id="IPR023088">
    <property type="entry name" value="PDEase"/>
</dbReference>
<dbReference type="InterPro" id="IPR002073">
    <property type="entry name" value="PDEase_catalytic_dom"/>
</dbReference>
<dbReference type="InterPro" id="IPR036971">
    <property type="entry name" value="PDEase_catalytic_dom_sf"/>
</dbReference>
<dbReference type="InterPro" id="IPR023174">
    <property type="entry name" value="PDEase_CS"/>
</dbReference>
<dbReference type="PANTHER" id="PTHR11347">
    <property type="entry name" value="CYCLIC NUCLEOTIDE PHOSPHODIESTERASE"/>
    <property type="match status" value="1"/>
</dbReference>
<dbReference type="Pfam" id="PF01590">
    <property type="entry name" value="GAF"/>
    <property type="match status" value="2"/>
</dbReference>
<dbReference type="Pfam" id="PF00233">
    <property type="entry name" value="PDEase_I"/>
    <property type="match status" value="1"/>
</dbReference>
<dbReference type="PRINTS" id="PR00387">
    <property type="entry name" value="PDIESTERASE1"/>
</dbReference>
<dbReference type="SMART" id="SM00065">
    <property type="entry name" value="GAF"/>
    <property type="match status" value="2"/>
</dbReference>
<dbReference type="SMART" id="SM00471">
    <property type="entry name" value="HDc"/>
    <property type="match status" value="1"/>
</dbReference>
<dbReference type="SUPFAM" id="SSF55781">
    <property type="entry name" value="GAF domain-like"/>
    <property type="match status" value="2"/>
</dbReference>
<dbReference type="SUPFAM" id="SSF109604">
    <property type="entry name" value="HD-domain/PDEase-like"/>
    <property type="match status" value="1"/>
</dbReference>
<dbReference type="PROSITE" id="PS00126">
    <property type="entry name" value="PDEASE_I_1"/>
    <property type="match status" value="1"/>
</dbReference>
<dbReference type="PROSITE" id="PS51845">
    <property type="entry name" value="PDEASE_I_2"/>
    <property type="match status" value="1"/>
</dbReference>
<sequence>MTDVSAPTGGATSPVDITASPGSTALPPVATTSAAASASSSQAKPLTNGAKKAATAAAAAGAEEGGASASNQVKQEQRRQSNNNRPAASGTPEAKQATPAGNPDPGAGSTSKSSSIHTQTSQQERAGRPTSSASQHDVDEVARLFEEKPEAFEKWLTERAPPEALGRLQEFIESRKPLKRPSVTSDLFQQWMAASPTVQQKSPRSLSNSSASSIPESRRHLMDLDEGELFMELIRDVANELDIDVLCHKILVNVGLLTHADRGSLFLAKGAPNNKYLVAKLFDVTQKTALKDAVTRASTEEIIIPFGIGIAGMVAQTKQMINIKEAYKDARFNCEIDLKTGYKTNAILCMPICNYEGDIIGVAQIINKTNGCMEFDEHDVEIFRRYLTFCGIGIQNAQLFEMSVQEYRRNQILLNLARSIFEEQNNLECLVTKIMTEARELLKCERCSVFLVDLDCCEAGCGRVGGAMRRFGVRSKQVSAIVEHVGGRRGNTSHLEKIIEKPNQPATRAIKSADSFEEKKMRNRFTVLFELGGEYQAANVSRPSTSELSTSTLAQIAQFVATTGQTVNICDVHEWVREHNQIRAESEIDSTQAILCMPIVNAKKTVIGVAQLINKANGVPFTESDASIFEAFAIFCGLGIHNTQMYENACKLMAKQKVALECLSYHATASQDQTEKLTQDAIADADTYNLYSFTFTDFELVDDDTCRAVLRMFMQCNLVSQFQIPYDVLCRWVLSVRKNYRPVKYHNWRHALNVAQTMFAMLKTGKMERFMTDLEILGLLVACLCHDLDHRGTNNAFQTKTESPLAILYTTSTMEHHHFDQCVMILNSEGNNIFQALSPEDYRSVMKTVESAILSTDLAMYFKKRNAFLELVENGEFDWQGEEKKDLLCGMMMTACDVSAIAKPWEVQHKVAKLVADEFFDQGDLEKLQLNTQPVAMMDRERKDELPKMQVGFIDVICLPLYRVLCDTFPWITPLYEGTLENRRNWQDLAEKVEMGLTWIDHDTIDKPVEEFAACADEEIKDIEFTVTTLNCNQSQQSQHGSEDSHTPEHQRSGSRLSMKKTGALGKAVRSKLSKTLYNSMDGSKPKTSLKLLESHVSEDMDDKSPTSPSQPQAAGSMGRMSASSSTSSAGGQGQCQVAAPGQAQDKSKKRSKLCALL</sequence>
<proteinExistence type="inferred from homology"/>
<comment type="function">
    <text evidence="2">Has a role regulating cGMP transport in Malpighian tubule principal cells.</text>
</comment>
<comment type="catalytic activity">
    <reaction evidence="2">
        <text>3',5'-cyclic GMP + H2O = GMP + H(+)</text>
        <dbReference type="Rhea" id="RHEA:16957"/>
        <dbReference type="ChEBI" id="CHEBI:15377"/>
        <dbReference type="ChEBI" id="CHEBI:15378"/>
        <dbReference type="ChEBI" id="CHEBI:57746"/>
        <dbReference type="ChEBI" id="CHEBI:58115"/>
        <dbReference type="EC" id="3.1.4.35"/>
    </reaction>
</comment>
<comment type="cofactor">
    <cofactor evidence="1">
        <name>a divalent metal cation</name>
        <dbReference type="ChEBI" id="CHEBI:60240"/>
    </cofactor>
    <text evidence="1">Binds 2 divalent metal cations per subunit. Site 1 may preferentially bind zinc ions, while site 2 has a preference for magnesium and/or manganese ions.</text>
</comment>
<comment type="subunit">
    <text evidence="2">Interacts with PrBP.</text>
</comment>
<comment type="subcellular location">
    <subcellularLocation>
        <location evidence="2">Cell membrane</location>
        <topology evidence="2">Lipid-anchor</topology>
        <orientation evidence="2">Cytoplasmic side</orientation>
    </subcellularLocation>
</comment>
<comment type="similarity">
    <text evidence="3">Belongs to the cyclic nucleotide phosphodiesterase family.</text>
</comment>